<accession>Q8V2K9</accession>
<name>KTHY_CAMPM</name>
<gene>
    <name type="primary">TMK</name>
    <name type="ordered locus">CMLV169</name>
</gene>
<feature type="chain" id="PRO_0000155221" description="Thymidylate kinase">
    <location>
        <begin position="1"/>
        <end position="204"/>
    </location>
</feature>
<feature type="binding site" evidence="1">
    <location>
        <begin position="11"/>
        <end position="18"/>
    </location>
    <ligand>
        <name>ATP</name>
        <dbReference type="ChEBI" id="CHEBI:30616"/>
    </ligand>
</feature>
<protein>
    <recommendedName>
        <fullName>Thymidylate kinase</fullName>
        <ecNumber>2.7.4.9</ecNumber>
    </recommendedName>
    <alternativeName>
        <fullName>dTMP kinase</fullName>
    </alternativeName>
</protein>
<organismHost>
    <name type="scientific">Camelus</name>
    <dbReference type="NCBI Taxonomy" id="9836"/>
</organismHost>
<reference key="1">
    <citation type="journal article" date="2002" name="Virology">
        <title>The genome of camelpox virus.</title>
        <authorList>
            <person name="Afonso C.L."/>
            <person name="Tulman E.R."/>
            <person name="Lu Z."/>
            <person name="Zsak L."/>
            <person name="Sandybaev N.T."/>
            <person name="Kerembekova U.Z."/>
            <person name="Zaitsev V.L."/>
            <person name="Kutish G.F."/>
            <person name="Rock D.L."/>
        </authorList>
    </citation>
    <scope>NUCLEOTIDE SEQUENCE [LARGE SCALE GENOMIC DNA]</scope>
</reference>
<organism>
    <name type="scientific">Camelpox virus (strain M-96)</name>
    <dbReference type="NCBI Taxonomy" id="203173"/>
    <lineage>
        <taxon>Viruses</taxon>
        <taxon>Varidnaviria</taxon>
        <taxon>Bamfordvirae</taxon>
        <taxon>Nucleocytoviricota</taxon>
        <taxon>Pokkesviricetes</taxon>
        <taxon>Chitovirales</taxon>
        <taxon>Poxviridae</taxon>
        <taxon>Chordopoxvirinae</taxon>
        <taxon>Orthopoxvirus</taxon>
        <taxon>Camelpox virus</taxon>
    </lineage>
</organism>
<evidence type="ECO:0000305" key="1"/>
<dbReference type="EC" id="2.7.4.9"/>
<dbReference type="EMBL" id="AF438165">
    <property type="protein sequence ID" value="AAL73876.1"/>
    <property type="status" value="ALT_INIT"/>
    <property type="molecule type" value="Genomic_DNA"/>
</dbReference>
<dbReference type="SMR" id="Q8V2K9"/>
<dbReference type="KEGG" id="vg:932521"/>
<dbReference type="UniPathway" id="UPA00575"/>
<dbReference type="Proteomes" id="UP000152221">
    <property type="component" value="Genome"/>
</dbReference>
<dbReference type="GO" id="GO:0005524">
    <property type="term" value="F:ATP binding"/>
    <property type="evidence" value="ECO:0007669"/>
    <property type="project" value="UniProtKB-KW"/>
</dbReference>
<dbReference type="GO" id="GO:0004798">
    <property type="term" value="F:dTMP kinase activity"/>
    <property type="evidence" value="ECO:0007669"/>
    <property type="project" value="UniProtKB-EC"/>
</dbReference>
<dbReference type="GO" id="GO:0004550">
    <property type="term" value="F:nucleoside diphosphate kinase activity"/>
    <property type="evidence" value="ECO:0007669"/>
    <property type="project" value="TreeGrafter"/>
</dbReference>
<dbReference type="GO" id="GO:0006233">
    <property type="term" value="P:dTDP biosynthetic process"/>
    <property type="evidence" value="ECO:0007669"/>
    <property type="project" value="InterPro"/>
</dbReference>
<dbReference type="GO" id="GO:0006235">
    <property type="term" value="P:dTTP biosynthetic process"/>
    <property type="evidence" value="ECO:0007669"/>
    <property type="project" value="UniProtKB-UniPathway"/>
</dbReference>
<dbReference type="GO" id="GO:0006227">
    <property type="term" value="P:dUDP biosynthetic process"/>
    <property type="evidence" value="ECO:0007669"/>
    <property type="project" value="TreeGrafter"/>
</dbReference>
<dbReference type="Gene3D" id="3.40.50.300">
    <property type="entry name" value="P-loop containing nucleotide triphosphate hydrolases"/>
    <property type="match status" value="1"/>
</dbReference>
<dbReference type="InterPro" id="IPR027417">
    <property type="entry name" value="P-loop_NTPase"/>
</dbReference>
<dbReference type="InterPro" id="IPR039430">
    <property type="entry name" value="Thymidylate_kin-like_dom"/>
</dbReference>
<dbReference type="InterPro" id="IPR018095">
    <property type="entry name" value="Thymidylate_kin_CS"/>
</dbReference>
<dbReference type="InterPro" id="IPR018094">
    <property type="entry name" value="Thymidylate_kinase"/>
</dbReference>
<dbReference type="NCBIfam" id="TIGR00041">
    <property type="entry name" value="DTMP_kinase"/>
    <property type="match status" value="1"/>
</dbReference>
<dbReference type="PANTHER" id="PTHR10344">
    <property type="entry name" value="THYMIDYLATE KINASE"/>
    <property type="match status" value="1"/>
</dbReference>
<dbReference type="PANTHER" id="PTHR10344:SF1">
    <property type="entry name" value="THYMIDYLATE KINASE"/>
    <property type="match status" value="1"/>
</dbReference>
<dbReference type="Pfam" id="PF02223">
    <property type="entry name" value="Thymidylate_kin"/>
    <property type="match status" value="1"/>
</dbReference>
<dbReference type="SUPFAM" id="SSF52540">
    <property type="entry name" value="P-loop containing nucleoside triphosphate hydrolases"/>
    <property type="match status" value="1"/>
</dbReference>
<dbReference type="PROSITE" id="PS01331">
    <property type="entry name" value="THYMIDYLATE_KINASE"/>
    <property type="match status" value="1"/>
</dbReference>
<sequence>MSRGALIVFEGLDKSGKTTQCMNIMESILANTIKYLNFPQRSTVTGKMIDDYLTRKKTYNDHIVNLLFCANRWEFASFIQEQLEQGITLIVDRYAFSGVAYAAAKGASMTLSKSYEFGLPKPDLVIFLESGSKEINKNVGEEIYEDVAFQQKVLQEYKKMIEEGDIHWQIISSEFEEDVKKELIKNIVIEAIHTVTGPVGQLWM</sequence>
<keyword id="KW-0067">ATP-binding</keyword>
<keyword id="KW-0418">Kinase</keyword>
<keyword id="KW-0545">Nucleotide biosynthesis</keyword>
<keyword id="KW-0547">Nucleotide-binding</keyword>
<keyword id="KW-0808">Transferase</keyword>
<comment type="catalytic activity">
    <reaction>
        <text>dTMP + ATP = dTDP + ADP</text>
        <dbReference type="Rhea" id="RHEA:13517"/>
        <dbReference type="ChEBI" id="CHEBI:30616"/>
        <dbReference type="ChEBI" id="CHEBI:58369"/>
        <dbReference type="ChEBI" id="CHEBI:63528"/>
        <dbReference type="ChEBI" id="CHEBI:456216"/>
        <dbReference type="EC" id="2.7.4.9"/>
    </reaction>
</comment>
<comment type="pathway">
    <text>Pyrimidine metabolism; dTTP biosynthesis.</text>
</comment>
<comment type="similarity">
    <text evidence="1">Belongs to the thymidylate kinase family.</text>
</comment>
<comment type="sequence caution" evidence="1">
    <conflict type="erroneous initiation">
        <sequence resource="EMBL-CDS" id="AAL73876"/>
    </conflict>
</comment>
<proteinExistence type="inferred from homology"/>